<keyword id="KW-0963">Cytoplasm</keyword>
<keyword id="KW-0238">DNA-binding</keyword>
<keyword id="KW-1185">Reference proteome</keyword>
<keyword id="KW-0678">Repressor</keyword>
<keyword id="KW-0804">Transcription</keyword>
<keyword id="KW-0805">Transcription regulation</keyword>
<comment type="function">
    <text evidence="1">DNA-binding global transcriptional regulator which is involved in the adaptive response to starvation and acts by directly or indirectly controlling the expression of numerous genes in response to nutrient availability. During rapid exponential growth, CodY is highly active and represses genes whose products allow adaptation to nutrient depletion.</text>
</comment>
<comment type="subcellular location">
    <subcellularLocation>
        <location evidence="1">Cytoplasm</location>
    </subcellularLocation>
</comment>
<comment type="similarity">
    <text evidence="1">Belongs to the CodY family.</text>
</comment>
<gene>
    <name evidence="1" type="primary">codY</name>
    <name type="ordered locus">BBR47_34870</name>
</gene>
<proteinExistence type="inferred from homology"/>
<sequence length="259" mass="28921">MDLLSKTRRINRMLQKSAGHAVNFNEMSQVLSDVIEANTYVVSRKGKLLGFAIHQEMDNSRMRKMLEDRRFPEEYSMGLLKVDETSANLDVDSPYTIFPVEMKEVFRTGWTTLVPIMGGGDRLGTLILGRINDQFVDDDLILAEVGATVVGMEILRERSEAIEEEARSKAVVQMAIGSLSYSELEAVEHIFEELEGKEGLLVASKIADRVGITRSVIVNALRKLESAGVIESRSLGMKGTFIKVLNEKLLPELEKLKTS</sequence>
<evidence type="ECO:0000255" key="1">
    <source>
        <dbReference type="HAMAP-Rule" id="MF_00621"/>
    </source>
</evidence>
<organism>
    <name type="scientific">Brevibacillus brevis (strain 47 / JCM 6285 / NBRC 100599)</name>
    <dbReference type="NCBI Taxonomy" id="358681"/>
    <lineage>
        <taxon>Bacteria</taxon>
        <taxon>Bacillati</taxon>
        <taxon>Bacillota</taxon>
        <taxon>Bacilli</taxon>
        <taxon>Bacillales</taxon>
        <taxon>Paenibacillaceae</taxon>
        <taxon>Brevibacillus</taxon>
    </lineage>
</organism>
<accession>C0ZFA5</accession>
<name>CODY_BREBN</name>
<reference key="1">
    <citation type="submission" date="2005-03" db="EMBL/GenBank/DDBJ databases">
        <title>Brevibacillus brevis strain 47, complete genome.</title>
        <authorList>
            <person name="Hosoyama A."/>
            <person name="Yamada R."/>
            <person name="Hongo Y."/>
            <person name="Terui Y."/>
            <person name="Ankai A."/>
            <person name="Masuyama W."/>
            <person name="Sekiguchi M."/>
            <person name="Takeda T."/>
            <person name="Asano K."/>
            <person name="Ohji S."/>
            <person name="Ichikawa N."/>
            <person name="Narita S."/>
            <person name="Aoki N."/>
            <person name="Miura H."/>
            <person name="Matsushita S."/>
            <person name="Sekigawa T."/>
            <person name="Yamagata H."/>
            <person name="Yoshikawa H."/>
            <person name="Udaka S."/>
            <person name="Tanikawa S."/>
            <person name="Fujita N."/>
        </authorList>
    </citation>
    <scope>NUCLEOTIDE SEQUENCE [LARGE SCALE GENOMIC DNA]</scope>
    <source>
        <strain>47 / JCM 6285 / NBRC 100599</strain>
    </source>
</reference>
<protein>
    <recommendedName>
        <fullName evidence="1">Global transcriptional regulator CodY</fullName>
    </recommendedName>
</protein>
<feature type="chain" id="PRO_1000147202" description="Global transcriptional regulator CodY">
    <location>
        <begin position="1"/>
        <end position="259"/>
    </location>
</feature>
<feature type="DNA-binding region" description="H-T-H motif" evidence="1">
    <location>
        <begin position="203"/>
        <end position="222"/>
    </location>
</feature>
<feature type="region of interest" description="GAF domain" evidence="1">
    <location>
        <begin position="1"/>
        <end position="155"/>
    </location>
</feature>
<dbReference type="EMBL" id="AP008955">
    <property type="protein sequence ID" value="BAH44464.1"/>
    <property type="molecule type" value="Genomic_DNA"/>
</dbReference>
<dbReference type="RefSeq" id="WP_015891762.1">
    <property type="nucleotide sequence ID" value="NC_012491.1"/>
</dbReference>
<dbReference type="SMR" id="C0ZFA5"/>
<dbReference type="STRING" id="358681.BBR47_34870"/>
<dbReference type="KEGG" id="bbe:BBR47_34870"/>
<dbReference type="eggNOG" id="COG4465">
    <property type="taxonomic scope" value="Bacteria"/>
</dbReference>
<dbReference type="HOGENOM" id="CLU_089581_0_0_9"/>
<dbReference type="Proteomes" id="UP000001877">
    <property type="component" value="Chromosome"/>
</dbReference>
<dbReference type="GO" id="GO:0005737">
    <property type="term" value="C:cytoplasm"/>
    <property type="evidence" value="ECO:0007669"/>
    <property type="project" value="UniProtKB-SubCell"/>
</dbReference>
<dbReference type="GO" id="GO:0003677">
    <property type="term" value="F:DNA binding"/>
    <property type="evidence" value="ECO:0007669"/>
    <property type="project" value="UniProtKB-UniRule"/>
</dbReference>
<dbReference type="GO" id="GO:0003700">
    <property type="term" value="F:DNA-binding transcription factor activity"/>
    <property type="evidence" value="ECO:0007669"/>
    <property type="project" value="InterPro"/>
</dbReference>
<dbReference type="GO" id="GO:0005525">
    <property type="term" value="F:GTP binding"/>
    <property type="evidence" value="ECO:0007669"/>
    <property type="project" value="InterPro"/>
</dbReference>
<dbReference type="GO" id="GO:0045892">
    <property type="term" value="P:negative regulation of DNA-templated transcription"/>
    <property type="evidence" value="ECO:0007669"/>
    <property type="project" value="UniProtKB-UniRule"/>
</dbReference>
<dbReference type="FunFam" id="1.10.10.10:FF:000034">
    <property type="entry name" value="GTP-sensing transcriptional pleiotropic repressor CodY"/>
    <property type="match status" value="1"/>
</dbReference>
<dbReference type="FunFam" id="3.30.450.40:FF:000003">
    <property type="entry name" value="GTP-sensing transcriptional pleiotropic repressor CodY"/>
    <property type="match status" value="1"/>
</dbReference>
<dbReference type="Gene3D" id="3.30.450.40">
    <property type="match status" value="1"/>
</dbReference>
<dbReference type="Gene3D" id="1.10.10.10">
    <property type="entry name" value="Winged helix-like DNA-binding domain superfamily/Winged helix DNA-binding domain"/>
    <property type="match status" value="1"/>
</dbReference>
<dbReference type="HAMAP" id="MF_00621">
    <property type="entry name" value="HTH_type_CodY"/>
    <property type="match status" value="1"/>
</dbReference>
<dbReference type="InterPro" id="IPR014154">
    <property type="entry name" value="CodY"/>
</dbReference>
<dbReference type="InterPro" id="IPR029016">
    <property type="entry name" value="GAF-like_dom_sf"/>
</dbReference>
<dbReference type="InterPro" id="IPR013198">
    <property type="entry name" value="GTP_trans_reg_CodY_C"/>
</dbReference>
<dbReference type="InterPro" id="IPR010312">
    <property type="entry name" value="Transc_reg_CodY_N"/>
</dbReference>
<dbReference type="InterPro" id="IPR036388">
    <property type="entry name" value="WH-like_DNA-bd_sf"/>
</dbReference>
<dbReference type="InterPro" id="IPR036390">
    <property type="entry name" value="WH_DNA-bd_sf"/>
</dbReference>
<dbReference type="NCBIfam" id="TIGR02787">
    <property type="entry name" value="codY_Gpos"/>
    <property type="match status" value="1"/>
</dbReference>
<dbReference type="NCBIfam" id="NF003170">
    <property type="entry name" value="PRK04158.1"/>
    <property type="match status" value="1"/>
</dbReference>
<dbReference type="PANTHER" id="PTHR40062:SF1">
    <property type="entry name" value="GLOBAL TRANSCRIPTIONAL REGULATOR CODY"/>
    <property type="match status" value="1"/>
</dbReference>
<dbReference type="PANTHER" id="PTHR40062">
    <property type="entry name" value="GTP-SENSING TRANSCRIPTIONAL PLEIOTROPIC REPRESSOR CODY"/>
    <property type="match status" value="1"/>
</dbReference>
<dbReference type="Pfam" id="PF06018">
    <property type="entry name" value="CodY"/>
    <property type="match status" value="1"/>
</dbReference>
<dbReference type="Pfam" id="PF08222">
    <property type="entry name" value="HTH_CodY"/>
    <property type="match status" value="1"/>
</dbReference>
<dbReference type="PIRSF" id="PIRSF011572">
    <property type="entry name" value="GTP_sensing_CodY"/>
    <property type="match status" value="1"/>
</dbReference>
<dbReference type="SUPFAM" id="SSF46785">
    <property type="entry name" value="Winged helix' DNA-binding domain"/>
    <property type="match status" value="1"/>
</dbReference>